<dbReference type="EMBL" id="U15217">
    <property type="protein sequence ID" value="AAA86313.1"/>
    <property type="molecule type" value="Genomic_DNA"/>
</dbReference>
<dbReference type="EMBL" id="Z75174">
    <property type="protein sequence ID" value="CAA99489.1"/>
    <property type="molecule type" value="Genomic_DNA"/>
</dbReference>
<dbReference type="EMBL" id="AY692772">
    <property type="protein sequence ID" value="AAT92791.1"/>
    <property type="molecule type" value="Genomic_DNA"/>
</dbReference>
<dbReference type="EMBL" id="U30184">
    <property type="protein sequence ID" value="AAB08526.1"/>
    <property type="molecule type" value="Genomic_DNA"/>
</dbReference>
<dbReference type="EMBL" id="BK006948">
    <property type="protein sequence ID" value="DAA11032.1"/>
    <property type="molecule type" value="Genomic_DNA"/>
</dbReference>
<dbReference type="PIR" id="S67163">
    <property type="entry name" value="S67163"/>
</dbReference>
<dbReference type="RefSeq" id="NP_014909.3">
    <property type="nucleotide sequence ID" value="NM_001183685.3"/>
</dbReference>
<dbReference type="BioGRID" id="34655">
    <property type="interactions" value="129"/>
</dbReference>
<dbReference type="DIP" id="DIP-4099N"/>
<dbReference type="FunCoup" id="P38969">
    <property type="interactions" value="48"/>
</dbReference>
<dbReference type="IntAct" id="P38969">
    <property type="interactions" value="4"/>
</dbReference>
<dbReference type="MINT" id="P38969"/>
<dbReference type="STRING" id="4932.YOR266W"/>
<dbReference type="PaxDb" id="4932-YOR266W"/>
<dbReference type="PeptideAtlas" id="P38969"/>
<dbReference type="EnsemblFungi" id="YOR266W_mRNA">
    <property type="protein sequence ID" value="YOR266W"/>
    <property type="gene ID" value="YOR266W"/>
</dbReference>
<dbReference type="GeneID" id="854440"/>
<dbReference type="KEGG" id="sce:YOR266W"/>
<dbReference type="AGR" id="SGD:S000005792"/>
<dbReference type="SGD" id="S000005792">
    <property type="gene designation" value="PNT1"/>
</dbReference>
<dbReference type="VEuPathDB" id="FungiDB:YOR266W"/>
<dbReference type="eggNOG" id="ENOG502S645">
    <property type="taxonomic scope" value="Eukaryota"/>
</dbReference>
<dbReference type="HOGENOM" id="CLU_061833_0_0_1"/>
<dbReference type="InParanoid" id="P38969"/>
<dbReference type="OMA" id="EKWGVNN"/>
<dbReference type="OrthoDB" id="73691at2759"/>
<dbReference type="BioCyc" id="YEAST:G3O-33756-MONOMER"/>
<dbReference type="BioGRID-ORCS" id="854440">
    <property type="hits" value="6 hits in 10 CRISPR screens"/>
</dbReference>
<dbReference type="PRO" id="PR:P38969"/>
<dbReference type="Proteomes" id="UP000002311">
    <property type="component" value="Chromosome XV"/>
</dbReference>
<dbReference type="RNAct" id="P38969">
    <property type="molecule type" value="protein"/>
</dbReference>
<dbReference type="GO" id="GO:0005743">
    <property type="term" value="C:mitochondrial inner membrane"/>
    <property type="evidence" value="ECO:0000314"/>
    <property type="project" value="SGD"/>
</dbReference>
<dbReference type="GO" id="GO:0005739">
    <property type="term" value="C:mitochondrion"/>
    <property type="evidence" value="ECO:0007005"/>
    <property type="project" value="SGD"/>
</dbReference>
<dbReference type="GO" id="GO:0032979">
    <property type="term" value="P:protein insertion into mitochondrial inner membrane from matrix"/>
    <property type="evidence" value="ECO:0000315"/>
    <property type="project" value="SGD"/>
</dbReference>
<dbReference type="GO" id="GO:0046677">
    <property type="term" value="P:response to antibiotic"/>
    <property type="evidence" value="ECO:0007669"/>
    <property type="project" value="UniProtKB-KW"/>
</dbReference>
<accession>P38969</accession>
<accession>D6W2W6</accession>
<accession>Q08730</accession>
<sequence length="423" mass="48934">MDSRVALVRKYIAPSVIKSDSIQLHGLVKAPLFKALNSRYKLGSLQIVQDVDWNAKTTPSDSPEPLAATLNSNRSLPMTKFPKQEILEQVKLDTKVGKWRKFMTGWFRIGLYLLKSYKTGIQNTLKVFWDTRNEEQKFSIKNGALANLVREIEMHEINTRLSSSSLPTSSSAKAPLRPLSINRKTLVELIRRDQIWKLPVFFTLVFIFEEVSVLIFTFFPRVCPYNCLTPGGYKKLSNSYIKGTTSTQGNYGLGPLEFTKQGTIKYEPPYAVPIENLYNFLTSFPQSMISNWKLYIYKKLKLQKLLCNEIEKIYQYLFIDDWLLLQSILNTDVEKTKIALSDRELVNCILERKLYHMGDDLNEMVNDTLGKEILLKRLFLYWTLRYNDTISLNGKHTFSEKWGVNNISLLKYNSELVATKDIQ</sequence>
<keyword id="KW-0046">Antibiotic resistance</keyword>
<keyword id="KW-0472">Membrane</keyword>
<keyword id="KW-0496">Mitochondrion</keyword>
<keyword id="KW-0999">Mitochondrion inner membrane</keyword>
<keyword id="KW-1185">Reference proteome</keyword>
<keyword id="KW-0809">Transit peptide</keyword>
<keyword id="KW-0812">Transmembrane</keyword>
<keyword id="KW-1133">Transmembrane helix</keyword>
<organism>
    <name type="scientific">Saccharomyces cerevisiae (strain ATCC 204508 / S288c)</name>
    <name type="common">Baker's yeast</name>
    <dbReference type="NCBI Taxonomy" id="559292"/>
    <lineage>
        <taxon>Eukaryota</taxon>
        <taxon>Fungi</taxon>
        <taxon>Dikarya</taxon>
        <taxon>Ascomycota</taxon>
        <taxon>Saccharomycotina</taxon>
        <taxon>Saccharomycetes</taxon>
        <taxon>Saccharomycetales</taxon>
        <taxon>Saccharomycetaceae</taxon>
        <taxon>Saccharomyces</taxon>
    </lineage>
</organism>
<gene>
    <name type="primary">PNT1</name>
    <name type="ordered locus">YOR266W</name>
</gene>
<reference key="1">
    <citation type="journal article" date="1994" name="Antimicrob. Agents Chemother.">
        <title>Characterization of the PNT1 pentamidine resistance gene of Saccharomyces cerevisiae.</title>
        <authorList>
            <person name="Ludewig G."/>
            <person name="Staben C."/>
        </authorList>
    </citation>
    <scope>NUCLEOTIDE SEQUENCE [GENOMIC DNA]</scope>
    <source>
        <strain>S21R</strain>
    </source>
</reference>
<reference key="2">
    <citation type="journal article" date="1997" name="Yeast">
        <title>Sequencing analysis of a 36.8 kb fragment of yeast chromosome XV reveals 26 open reading frames including SEC63, CDC31, SUG2, GCD1, RBL2, PNT1, PAC1 and VPH1.</title>
        <authorList>
            <person name="Poirey R."/>
            <person name="Jauniaux J.-C."/>
        </authorList>
    </citation>
    <scope>NUCLEOTIDE SEQUENCE [GENOMIC DNA]</scope>
    <source>
        <strain>ATCC 96604 / S288c / FY1679</strain>
    </source>
</reference>
<reference key="3">
    <citation type="journal article" date="1997" name="Nature">
        <title>The nucleotide sequence of Saccharomyces cerevisiae chromosome XV.</title>
        <authorList>
            <person name="Dujon B."/>
            <person name="Albermann K."/>
            <person name="Aldea M."/>
            <person name="Alexandraki D."/>
            <person name="Ansorge W."/>
            <person name="Arino J."/>
            <person name="Benes V."/>
            <person name="Bohn C."/>
            <person name="Bolotin-Fukuhara M."/>
            <person name="Bordonne R."/>
            <person name="Boyer J."/>
            <person name="Camasses A."/>
            <person name="Casamayor A."/>
            <person name="Casas C."/>
            <person name="Cheret G."/>
            <person name="Cziepluch C."/>
            <person name="Daignan-Fornier B."/>
            <person name="Dang V.-D."/>
            <person name="de Haan M."/>
            <person name="Delius H."/>
            <person name="Durand P."/>
            <person name="Fairhead C."/>
            <person name="Feldmann H."/>
            <person name="Gaillon L."/>
            <person name="Galisson F."/>
            <person name="Gamo F.-J."/>
            <person name="Gancedo C."/>
            <person name="Goffeau A."/>
            <person name="Goulding S.E."/>
            <person name="Grivell L.A."/>
            <person name="Habbig B."/>
            <person name="Hand N.J."/>
            <person name="Hani J."/>
            <person name="Hattenhorst U."/>
            <person name="Hebling U."/>
            <person name="Hernando Y."/>
            <person name="Herrero E."/>
            <person name="Heumann K."/>
            <person name="Hiesel R."/>
            <person name="Hilger F."/>
            <person name="Hofmann B."/>
            <person name="Hollenberg C.P."/>
            <person name="Hughes B."/>
            <person name="Jauniaux J.-C."/>
            <person name="Kalogeropoulos A."/>
            <person name="Katsoulou C."/>
            <person name="Kordes E."/>
            <person name="Lafuente M.J."/>
            <person name="Landt O."/>
            <person name="Louis E.J."/>
            <person name="Maarse A.C."/>
            <person name="Madania A."/>
            <person name="Mannhaupt G."/>
            <person name="Marck C."/>
            <person name="Martin R.P."/>
            <person name="Mewes H.-W."/>
            <person name="Michaux G."/>
            <person name="Paces V."/>
            <person name="Parle-McDermott A.G."/>
            <person name="Pearson B.M."/>
            <person name="Perrin A."/>
            <person name="Pettersson B."/>
            <person name="Poch O."/>
            <person name="Pohl T.M."/>
            <person name="Poirey R."/>
            <person name="Portetelle D."/>
            <person name="Pujol A."/>
            <person name="Purnelle B."/>
            <person name="Ramezani Rad M."/>
            <person name="Rechmann S."/>
            <person name="Schwager C."/>
            <person name="Schweizer M."/>
            <person name="Sor F."/>
            <person name="Sterky F."/>
            <person name="Tarassov I.A."/>
            <person name="Teodoru C."/>
            <person name="Tettelin H."/>
            <person name="Thierry A."/>
            <person name="Tobiasch E."/>
            <person name="Tzermia M."/>
            <person name="Uhlen M."/>
            <person name="Unseld M."/>
            <person name="Valens M."/>
            <person name="Vandenbol M."/>
            <person name="Vetter I."/>
            <person name="Vlcek C."/>
            <person name="Voet M."/>
            <person name="Volckaert G."/>
            <person name="Voss H."/>
            <person name="Wambutt R."/>
            <person name="Wedler H."/>
            <person name="Wiemann S."/>
            <person name="Winsor B."/>
            <person name="Wolfe K.H."/>
            <person name="Zollner A."/>
            <person name="Zumstein E."/>
            <person name="Kleine K."/>
        </authorList>
    </citation>
    <scope>NUCLEOTIDE SEQUENCE [LARGE SCALE GENOMIC DNA]</scope>
    <source>
        <strain>ATCC 204508 / S288c</strain>
    </source>
</reference>
<reference key="4">
    <citation type="journal article" date="2014" name="G3 (Bethesda)">
        <title>The reference genome sequence of Saccharomyces cerevisiae: Then and now.</title>
        <authorList>
            <person name="Engel S.R."/>
            <person name="Dietrich F.S."/>
            <person name="Fisk D.G."/>
            <person name="Binkley G."/>
            <person name="Balakrishnan R."/>
            <person name="Costanzo M.C."/>
            <person name="Dwight S.S."/>
            <person name="Hitz B.C."/>
            <person name="Karra K."/>
            <person name="Nash R.S."/>
            <person name="Weng S."/>
            <person name="Wong E.D."/>
            <person name="Lloyd P."/>
            <person name="Skrzypek M.S."/>
            <person name="Miyasato S.R."/>
            <person name="Simison M."/>
            <person name="Cherry J.M."/>
        </authorList>
    </citation>
    <scope>GENOME REANNOTATION</scope>
    <source>
        <strain>ATCC 204508 / S288c</strain>
    </source>
</reference>
<reference key="5">
    <citation type="journal article" date="2007" name="Genome Res.">
        <title>Approaching a complete repository of sequence-verified protein-encoding clones for Saccharomyces cerevisiae.</title>
        <authorList>
            <person name="Hu Y."/>
            <person name="Rolfs A."/>
            <person name="Bhullar B."/>
            <person name="Murthy T.V.S."/>
            <person name="Zhu C."/>
            <person name="Berger M.F."/>
            <person name="Camargo A.A."/>
            <person name="Kelley F."/>
            <person name="McCarron S."/>
            <person name="Jepson D."/>
            <person name="Richardson A."/>
            <person name="Raphael J."/>
            <person name="Moreira D."/>
            <person name="Taycher E."/>
            <person name="Zuo D."/>
            <person name="Mohr S."/>
            <person name="Kane M.F."/>
            <person name="Williamson J."/>
            <person name="Simpson A.J.G."/>
            <person name="Bulyk M.L."/>
            <person name="Harlow E."/>
            <person name="Marsischky G."/>
            <person name="Kolodner R.D."/>
            <person name="LaBaer J."/>
        </authorList>
    </citation>
    <scope>NUCLEOTIDE SEQUENCE [GENOMIC DNA]</scope>
    <source>
        <strain>ATCC 204508 / S288c</strain>
    </source>
</reference>
<reference key="6">
    <citation type="journal article" date="1995" name="Cell">
        <title>Rbl2p, a yeast protein that binds to beta-tubulin and participates in microtubule function in vivo.</title>
        <authorList>
            <person name="Archer J.E."/>
            <person name="Vega L.R."/>
            <person name="Solomon F."/>
        </authorList>
    </citation>
    <scope>NUCLEOTIDE SEQUENCE [GENOMIC DNA] OF 1-12</scope>
</reference>
<reference key="7">
    <citation type="journal article" date="1999" name="Mol. Cell. Biol.">
        <title>Mutations affecting a yeast mitochondrial inner membrane protein, pnt1p, block export of a mitochondrially synthesized fusion protein from the matrix.</title>
        <authorList>
            <person name="He S."/>
            <person name="Fox T.D."/>
        </authorList>
    </citation>
    <scope>FUNCTION</scope>
</reference>
<reference key="8">
    <citation type="journal article" date="2002" name="Mol. Biol. Cell">
        <title>Cox18p is required for export of the mitochondrially encoded Saccharomyces cerevisiae Cox2p C-tail and interacts with Pnt1p and Mss2p in the inner membrane.</title>
        <authorList>
            <person name="Saracco S.A."/>
            <person name="Fox T.D."/>
        </authorList>
    </citation>
    <scope>INTERACTION WITH COX18</scope>
</reference>
<reference key="9">
    <citation type="journal article" date="2003" name="Nature">
        <title>Global analysis of protein expression in yeast.</title>
        <authorList>
            <person name="Ghaemmaghami S."/>
            <person name="Huh W.-K."/>
            <person name="Bower K."/>
            <person name="Howson R.W."/>
            <person name="Belle A."/>
            <person name="Dephoure N."/>
            <person name="O'Shea E.K."/>
            <person name="Weissman J.S."/>
        </authorList>
    </citation>
    <scope>LEVEL OF PROTEIN EXPRESSION [LARGE SCALE ANALYSIS]</scope>
</reference>
<reference key="10">
    <citation type="journal article" date="2006" name="J. Proteome Res.">
        <title>Toward the complete yeast mitochondrial proteome: multidimensional separation techniques for mitochondrial proteomics.</title>
        <authorList>
            <person name="Reinders J."/>
            <person name="Zahedi R.P."/>
            <person name="Pfanner N."/>
            <person name="Meisinger C."/>
            <person name="Sickmann A."/>
        </authorList>
    </citation>
    <scope>SUBCELLULAR LOCATION [LARGE SCALE ANALYSIS]</scope>
    <scope>IDENTIFICATION BY MASS SPECTROMETRY</scope>
</reference>
<evidence type="ECO:0000255" key="1"/>
<evidence type="ECO:0000269" key="2">
    <source>
    </source>
</evidence>
<evidence type="ECO:0000269" key="3">
    <source>
    </source>
</evidence>
<evidence type="ECO:0000269" key="4">
    <source>
    </source>
</evidence>
<evidence type="ECO:0000269" key="5">
    <source>
    </source>
</evidence>
<evidence type="ECO:0000305" key="6"/>
<feature type="transit peptide" description="Mitochondrion" evidence="1">
    <location>
        <begin position="1"/>
        <end status="unknown"/>
    </location>
</feature>
<feature type="chain" id="PRO_0000022080" description="Pentamidine resistance factor, mitochondrial">
    <location>
        <begin status="unknown"/>
        <end position="423"/>
    </location>
</feature>
<feature type="transmembrane region" description="Helical" evidence="1">
    <location>
        <begin position="199"/>
        <end position="219"/>
    </location>
</feature>
<feature type="sequence conflict" description="In Ref. 1; AAA86313." evidence="6" ref="1">
    <original>NISLLKYNSELVATKDIQ</original>
    <variation>IYHC</variation>
    <location>
        <begin position="406"/>
        <end position="423"/>
    </location>
</feature>
<name>PNT1_YEAST</name>
<protein>
    <recommendedName>
        <fullName>Pentamidine resistance factor, mitochondrial</fullName>
    </recommendedName>
</protein>
<comment type="function">
    <text evidence="2">Probably involved in mitochondrial export. Confers resistance to the anti-pneumocystis carinii drug pentamidine. May act by the removal of pentamidine, or its damage targets, from the matrix by an active-transport mechanism.</text>
</comment>
<comment type="subunit">
    <text evidence="3">Interacts with COX18. This interaction may be essential for its insertion into mitochondrial inner membrane.</text>
</comment>
<comment type="subcellular location">
    <subcellularLocation>
        <location evidence="5">Mitochondrion inner membrane</location>
        <topology evidence="5">Single-pass membrane protein</topology>
    </subcellularLocation>
</comment>
<comment type="miscellaneous">
    <text evidence="4">Present with 1460 molecules/cell in log phase SD medium.</text>
</comment>
<proteinExistence type="evidence at protein level"/>